<sequence length="216" mass="23649">MSLPMLQVALDNQTMDSAYETTRLIAEEVDIIEVGTILCVGEGVRAVRDLKALYPHKIVLADAKIADAGKILSRMCFEANADWVTVICCADINTAKGALDVAKEFNGDVQIELTGYWTWEQAQQWRDAGIQQVVYHRSRDAQAAGVAWGEADITAIKRLSDMGFKVTVTGGLALEDLPLFKGIPIHVFIAGRSIRDAASPVEAARQFKRSIAELWG</sequence>
<dbReference type="EC" id="4.1.1.85" evidence="1"/>
<dbReference type="EMBL" id="CU928145">
    <property type="protein sequence ID" value="CAV01690.1"/>
    <property type="molecule type" value="Genomic_DNA"/>
</dbReference>
<dbReference type="RefSeq" id="WP_000056760.1">
    <property type="nucleotide sequence ID" value="NC_011748.1"/>
</dbReference>
<dbReference type="SMR" id="B7LCQ5"/>
<dbReference type="GeneID" id="75202430"/>
<dbReference type="KEGG" id="eck:EC55989_4753"/>
<dbReference type="HOGENOM" id="CLU_081825_0_0_6"/>
<dbReference type="UniPathway" id="UPA00263">
    <property type="reaction ID" value="UER00378"/>
</dbReference>
<dbReference type="Proteomes" id="UP000000746">
    <property type="component" value="Chromosome"/>
</dbReference>
<dbReference type="GO" id="GO:0033982">
    <property type="term" value="F:3-dehydro-L-gulonate-6-phosphate decarboxylase activity"/>
    <property type="evidence" value="ECO:0007669"/>
    <property type="project" value="UniProtKB-EC"/>
</dbReference>
<dbReference type="GO" id="GO:0000287">
    <property type="term" value="F:magnesium ion binding"/>
    <property type="evidence" value="ECO:0007669"/>
    <property type="project" value="UniProtKB-UniRule"/>
</dbReference>
<dbReference type="GO" id="GO:0004590">
    <property type="term" value="F:orotidine-5'-phosphate decarboxylase activity"/>
    <property type="evidence" value="ECO:0007669"/>
    <property type="project" value="InterPro"/>
</dbReference>
<dbReference type="GO" id="GO:0006207">
    <property type="term" value="P:'de novo' pyrimidine nucleobase biosynthetic process"/>
    <property type="evidence" value="ECO:0007669"/>
    <property type="project" value="InterPro"/>
</dbReference>
<dbReference type="GO" id="GO:0019854">
    <property type="term" value="P:L-ascorbic acid catabolic process"/>
    <property type="evidence" value="ECO:0007669"/>
    <property type="project" value="UniProtKB-UniRule"/>
</dbReference>
<dbReference type="CDD" id="cd04726">
    <property type="entry name" value="KGPDC_HPS"/>
    <property type="match status" value="1"/>
</dbReference>
<dbReference type="FunFam" id="3.20.20.70:FF:000022">
    <property type="entry name" value="3-keto-L-gulonate-6-phosphate decarboxylase UlaD"/>
    <property type="match status" value="1"/>
</dbReference>
<dbReference type="Gene3D" id="3.20.20.70">
    <property type="entry name" value="Aldolase class I"/>
    <property type="match status" value="1"/>
</dbReference>
<dbReference type="HAMAP" id="MF_01267">
    <property type="entry name" value="UlaD"/>
    <property type="match status" value="1"/>
</dbReference>
<dbReference type="InterPro" id="IPR023942">
    <property type="entry name" value="3-keto-L-gulonate6Pdecase_UlaD"/>
</dbReference>
<dbReference type="InterPro" id="IPR013785">
    <property type="entry name" value="Aldolase_TIM"/>
</dbReference>
<dbReference type="InterPro" id="IPR041710">
    <property type="entry name" value="HPS/KGPDC"/>
</dbReference>
<dbReference type="InterPro" id="IPR001754">
    <property type="entry name" value="OMPdeCOase_dom"/>
</dbReference>
<dbReference type="InterPro" id="IPR011060">
    <property type="entry name" value="RibuloseP-bd_barrel"/>
</dbReference>
<dbReference type="NCBIfam" id="NF009832">
    <property type="entry name" value="PRK13306.1"/>
    <property type="match status" value="1"/>
</dbReference>
<dbReference type="PANTHER" id="PTHR35039">
    <property type="entry name" value="3-KETO-L-GULONATE-6-PHOSPHATE DECARBOXYLASE SGBH-RELATED"/>
    <property type="match status" value="1"/>
</dbReference>
<dbReference type="PANTHER" id="PTHR35039:SF3">
    <property type="entry name" value="3-KETO-L-GULONATE-6-PHOSPHATE DECARBOXYLASE SGBH-RELATED"/>
    <property type="match status" value="1"/>
</dbReference>
<dbReference type="Pfam" id="PF00215">
    <property type="entry name" value="OMPdecase"/>
    <property type="match status" value="1"/>
</dbReference>
<dbReference type="SMART" id="SM00934">
    <property type="entry name" value="OMPdecase"/>
    <property type="match status" value="1"/>
</dbReference>
<dbReference type="SUPFAM" id="SSF51366">
    <property type="entry name" value="Ribulose-phoshate binding barrel"/>
    <property type="match status" value="1"/>
</dbReference>
<proteinExistence type="inferred from homology"/>
<accession>B7LCQ5</accession>
<gene>
    <name evidence="1" type="primary">ulaD</name>
    <name type="ordered locus">EC55989_4753</name>
</gene>
<comment type="function">
    <text evidence="1">Catalyzes the decarboxylation of 3-keto-L-gulonate-6-P into L-xylulose-5-P. Is involved in the anaerobic L-ascorbate utilization.</text>
</comment>
<comment type="catalytic activity">
    <reaction evidence="1">
        <text>3-dehydro-L-gulonate 6-phosphate + H(+) = L-xylulose 5-phosphate + CO2</text>
        <dbReference type="Rhea" id="RHEA:14353"/>
        <dbReference type="ChEBI" id="CHEBI:15378"/>
        <dbReference type="ChEBI" id="CHEBI:16526"/>
        <dbReference type="ChEBI" id="CHEBI:57829"/>
        <dbReference type="ChEBI" id="CHEBI:58774"/>
        <dbReference type="EC" id="4.1.1.85"/>
    </reaction>
</comment>
<comment type="cofactor">
    <cofactor evidence="1">
        <name>Mg(2+)</name>
        <dbReference type="ChEBI" id="CHEBI:18420"/>
    </cofactor>
    <text evidence="1">Binds 1 Mg(2+) ion per subunit.</text>
</comment>
<comment type="pathway">
    <text evidence="1">Cofactor degradation; L-ascorbate degradation; D-xylulose 5-phosphate from L-ascorbate: step 2/4.</text>
</comment>
<comment type="subunit">
    <text evidence="1">Homodimer.</text>
</comment>
<comment type="induction">
    <text evidence="1">Induced by L-ascorbate. Repressed by UlaR.</text>
</comment>
<comment type="similarity">
    <text evidence="1">Belongs to the HPS/KGPDC family. KGPDC subfamily.</text>
</comment>
<name>ULAD_ECO55</name>
<feature type="chain" id="PRO_1000165141" description="3-keto-L-gulonate-6-phosphate decarboxylase UlaD">
    <location>
        <begin position="1"/>
        <end position="216"/>
    </location>
</feature>
<feature type="binding site" evidence="1">
    <location>
        <position position="11"/>
    </location>
    <ligand>
        <name>substrate</name>
    </ligand>
</feature>
<feature type="binding site" evidence="1">
    <location>
        <position position="33"/>
    </location>
    <ligand>
        <name>Mg(2+)</name>
        <dbReference type="ChEBI" id="CHEBI:18420"/>
    </ligand>
</feature>
<feature type="binding site" evidence="1">
    <location>
        <position position="62"/>
    </location>
    <ligand>
        <name>Mg(2+)</name>
        <dbReference type="ChEBI" id="CHEBI:18420"/>
    </ligand>
</feature>
<feature type="binding site" evidence="1">
    <location>
        <position position="192"/>
    </location>
    <ligand>
        <name>substrate</name>
    </ligand>
</feature>
<feature type="site" description="Transition state stabilizer" evidence="1">
    <location>
        <position position="64"/>
    </location>
</feature>
<feature type="site" description="Transition state stabilizer" evidence="1">
    <location>
        <position position="67"/>
    </location>
</feature>
<reference key="1">
    <citation type="journal article" date="2009" name="PLoS Genet.">
        <title>Organised genome dynamics in the Escherichia coli species results in highly diverse adaptive paths.</title>
        <authorList>
            <person name="Touchon M."/>
            <person name="Hoede C."/>
            <person name="Tenaillon O."/>
            <person name="Barbe V."/>
            <person name="Baeriswyl S."/>
            <person name="Bidet P."/>
            <person name="Bingen E."/>
            <person name="Bonacorsi S."/>
            <person name="Bouchier C."/>
            <person name="Bouvet O."/>
            <person name="Calteau A."/>
            <person name="Chiapello H."/>
            <person name="Clermont O."/>
            <person name="Cruveiller S."/>
            <person name="Danchin A."/>
            <person name="Diard M."/>
            <person name="Dossat C."/>
            <person name="Karoui M.E."/>
            <person name="Frapy E."/>
            <person name="Garry L."/>
            <person name="Ghigo J.M."/>
            <person name="Gilles A.M."/>
            <person name="Johnson J."/>
            <person name="Le Bouguenec C."/>
            <person name="Lescat M."/>
            <person name="Mangenot S."/>
            <person name="Martinez-Jehanne V."/>
            <person name="Matic I."/>
            <person name="Nassif X."/>
            <person name="Oztas S."/>
            <person name="Petit M.A."/>
            <person name="Pichon C."/>
            <person name="Rouy Z."/>
            <person name="Ruf C.S."/>
            <person name="Schneider D."/>
            <person name="Tourret J."/>
            <person name="Vacherie B."/>
            <person name="Vallenet D."/>
            <person name="Medigue C."/>
            <person name="Rocha E.P.C."/>
            <person name="Denamur E."/>
        </authorList>
    </citation>
    <scope>NUCLEOTIDE SEQUENCE [LARGE SCALE GENOMIC DNA]</scope>
    <source>
        <strain>55989 / EAEC</strain>
    </source>
</reference>
<evidence type="ECO:0000255" key="1">
    <source>
        <dbReference type="HAMAP-Rule" id="MF_01267"/>
    </source>
</evidence>
<organism>
    <name type="scientific">Escherichia coli (strain 55989 / EAEC)</name>
    <dbReference type="NCBI Taxonomy" id="585055"/>
    <lineage>
        <taxon>Bacteria</taxon>
        <taxon>Pseudomonadati</taxon>
        <taxon>Pseudomonadota</taxon>
        <taxon>Gammaproteobacteria</taxon>
        <taxon>Enterobacterales</taxon>
        <taxon>Enterobacteriaceae</taxon>
        <taxon>Escherichia</taxon>
    </lineage>
</organism>
<protein>
    <recommendedName>
        <fullName evidence="1">3-keto-L-gulonate-6-phosphate decarboxylase UlaD</fullName>
        <ecNumber evidence="1">4.1.1.85</ecNumber>
    </recommendedName>
    <alternativeName>
        <fullName evidence="1">3-dehydro-L-gulonate-6-phosphate decarboxylase</fullName>
    </alternativeName>
    <alternativeName>
        <fullName evidence="1">KGPDC</fullName>
    </alternativeName>
    <alternativeName>
        <fullName evidence="1">L-ascorbate utilization protein D</fullName>
    </alternativeName>
</protein>
<keyword id="KW-0119">Carbohydrate metabolism</keyword>
<keyword id="KW-0210">Decarboxylase</keyword>
<keyword id="KW-0456">Lyase</keyword>
<keyword id="KW-0460">Magnesium</keyword>
<keyword id="KW-0479">Metal-binding</keyword>
<keyword id="KW-1185">Reference proteome</keyword>